<keyword id="KW-0963">Cytoplasm</keyword>
<keyword id="KW-0274">FAD</keyword>
<keyword id="KW-0285">Flavoprotein</keyword>
<keyword id="KW-0520">NAD</keyword>
<keyword id="KW-0819">tRNA processing</keyword>
<reference key="1">
    <citation type="journal article" date="2009" name="Appl. Environ. Microbiol.">
        <title>Three genomes from the phylum Acidobacteria provide insight into the lifestyles of these microorganisms in soils.</title>
        <authorList>
            <person name="Ward N.L."/>
            <person name="Challacombe J.F."/>
            <person name="Janssen P.H."/>
            <person name="Henrissat B."/>
            <person name="Coutinho P.M."/>
            <person name="Wu M."/>
            <person name="Xie G."/>
            <person name="Haft D.H."/>
            <person name="Sait M."/>
            <person name="Badger J."/>
            <person name="Barabote R.D."/>
            <person name="Bradley B."/>
            <person name="Brettin T.S."/>
            <person name="Brinkac L.M."/>
            <person name="Bruce D."/>
            <person name="Creasy T."/>
            <person name="Daugherty S.C."/>
            <person name="Davidsen T.M."/>
            <person name="DeBoy R.T."/>
            <person name="Detter J.C."/>
            <person name="Dodson R.J."/>
            <person name="Durkin A.S."/>
            <person name="Ganapathy A."/>
            <person name="Gwinn-Giglio M."/>
            <person name="Han C.S."/>
            <person name="Khouri H."/>
            <person name="Kiss H."/>
            <person name="Kothari S.P."/>
            <person name="Madupu R."/>
            <person name="Nelson K.E."/>
            <person name="Nelson W.C."/>
            <person name="Paulsen I."/>
            <person name="Penn K."/>
            <person name="Ren Q."/>
            <person name="Rosovitz M.J."/>
            <person name="Selengut J.D."/>
            <person name="Shrivastava S."/>
            <person name="Sullivan S.A."/>
            <person name="Tapia R."/>
            <person name="Thompson L.S."/>
            <person name="Watkins K.L."/>
            <person name="Yang Q."/>
            <person name="Yu C."/>
            <person name="Zafar N."/>
            <person name="Zhou L."/>
            <person name="Kuske C.R."/>
        </authorList>
    </citation>
    <scope>NUCLEOTIDE SEQUENCE [LARGE SCALE GENOMIC DNA]</scope>
    <source>
        <strain>Ellin6076</strain>
    </source>
</reference>
<sequence>MVAMPERYDVVVIGAGHAGCEAARACARIGLRTAMVTMNLDLIAQMSCNPAIGGIAKGHLVREIDALGGVMGEVADSVGIQFRLLNTSRGPAVWSPRAQMDKKLYRFRMREVLEAEPNLRIKQAEVAALTFDAVRRVNGVLLRDGRTIPAGAVIVTTGTFLNGLAHVGEMTYSCGRNGEAPSQLLGDQLRSMGLNWTRLKTGTPPRLDGRSIDWSSFEPQAGDAEPTPFSFLTGRIERQQIQCHIGYTTDETRRVLQEAIPRSPLYSGQIEGVGPRYCPSIEDKFVKFPDKVRHQIFLEPEGLDTHEVYVNGMSTSMPTDVQVAMVASIPGLEQAEMIRPGYAIEYDAIDPRELNHTLEVKSIPGLYLAGQINGTSGYEEAGIQGLIAGLNAAMSLGGSDPVIIGRTEGYAGILVDDLITKGADEPYRMFTSRAEFRLHLRIDNADARLTPLGRRAGLATDERWELFQRKERQKLRLTQAFETHKNGQLLKRPEVSISDFLPWIVEVLGEAPCRGLLETVSTEAKYGGYIQQQERQMARMKDSERRAIPHGFEYRGIPGLSREIQDKLDKVRPGTLGQAGRVPGVTPAAIAVLDCYLSLHIGPN</sequence>
<gene>
    <name evidence="1" type="primary">mnmG</name>
    <name evidence="1" type="synonym">gidA</name>
    <name type="ordered locus">Acid_0015</name>
</gene>
<proteinExistence type="inferred from homology"/>
<protein>
    <recommendedName>
        <fullName evidence="1">tRNA uridine 5-carboxymethylaminomethyl modification enzyme MnmG</fullName>
    </recommendedName>
    <alternativeName>
        <fullName evidence="1">Glucose-inhibited division protein A</fullName>
    </alternativeName>
</protein>
<feature type="chain" id="PRO_1000016683" description="tRNA uridine 5-carboxymethylaminomethyl modification enzyme MnmG">
    <location>
        <begin position="1"/>
        <end position="604"/>
    </location>
</feature>
<feature type="binding site" evidence="1">
    <location>
        <begin position="14"/>
        <end position="19"/>
    </location>
    <ligand>
        <name>FAD</name>
        <dbReference type="ChEBI" id="CHEBI:57692"/>
    </ligand>
</feature>
<feature type="binding site" evidence="1">
    <location>
        <position position="126"/>
    </location>
    <ligand>
        <name>FAD</name>
        <dbReference type="ChEBI" id="CHEBI:57692"/>
    </ligand>
</feature>
<feature type="binding site" evidence="1">
    <location>
        <position position="182"/>
    </location>
    <ligand>
        <name>FAD</name>
        <dbReference type="ChEBI" id="CHEBI:57692"/>
    </ligand>
</feature>
<feature type="binding site" evidence="1">
    <location>
        <begin position="274"/>
        <end position="288"/>
    </location>
    <ligand>
        <name>NAD(+)</name>
        <dbReference type="ChEBI" id="CHEBI:57540"/>
    </ligand>
</feature>
<feature type="binding site" evidence="1">
    <location>
        <position position="371"/>
    </location>
    <ligand>
        <name>FAD</name>
        <dbReference type="ChEBI" id="CHEBI:57692"/>
    </ligand>
</feature>
<organism>
    <name type="scientific">Solibacter usitatus (strain Ellin6076)</name>
    <dbReference type="NCBI Taxonomy" id="234267"/>
    <lineage>
        <taxon>Bacteria</taxon>
        <taxon>Pseudomonadati</taxon>
        <taxon>Acidobacteriota</taxon>
        <taxon>Terriglobia</taxon>
        <taxon>Bryobacterales</taxon>
        <taxon>Solibacteraceae</taxon>
        <taxon>Candidatus Solibacter</taxon>
    </lineage>
</organism>
<accession>Q02D35</accession>
<dbReference type="EMBL" id="CP000473">
    <property type="protein sequence ID" value="ABJ81031.1"/>
    <property type="molecule type" value="Genomic_DNA"/>
</dbReference>
<dbReference type="SMR" id="Q02D35"/>
<dbReference type="FunCoup" id="Q02D35">
    <property type="interactions" value="640"/>
</dbReference>
<dbReference type="STRING" id="234267.Acid_0015"/>
<dbReference type="KEGG" id="sus:Acid_0015"/>
<dbReference type="eggNOG" id="COG0445">
    <property type="taxonomic scope" value="Bacteria"/>
</dbReference>
<dbReference type="HOGENOM" id="CLU_007831_2_2_0"/>
<dbReference type="InParanoid" id="Q02D35"/>
<dbReference type="OrthoDB" id="9815560at2"/>
<dbReference type="GO" id="GO:0005829">
    <property type="term" value="C:cytosol"/>
    <property type="evidence" value="ECO:0007669"/>
    <property type="project" value="TreeGrafter"/>
</dbReference>
<dbReference type="GO" id="GO:0050660">
    <property type="term" value="F:flavin adenine dinucleotide binding"/>
    <property type="evidence" value="ECO:0007669"/>
    <property type="project" value="UniProtKB-UniRule"/>
</dbReference>
<dbReference type="GO" id="GO:0030488">
    <property type="term" value="P:tRNA methylation"/>
    <property type="evidence" value="ECO:0007669"/>
    <property type="project" value="TreeGrafter"/>
</dbReference>
<dbReference type="GO" id="GO:0002098">
    <property type="term" value="P:tRNA wobble uridine modification"/>
    <property type="evidence" value="ECO:0007669"/>
    <property type="project" value="InterPro"/>
</dbReference>
<dbReference type="FunFam" id="1.10.150.570:FF:000001">
    <property type="entry name" value="tRNA uridine 5-carboxymethylaminomethyl modification enzyme MnmG"/>
    <property type="match status" value="1"/>
</dbReference>
<dbReference type="FunFam" id="3.50.50.60:FF:000002">
    <property type="entry name" value="tRNA uridine 5-carboxymethylaminomethyl modification enzyme MnmG"/>
    <property type="match status" value="1"/>
</dbReference>
<dbReference type="Gene3D" id="3.50.50.60">
    <property type="entry name" value="FAD/NAD(P)-binding domain"/>
    <property type="match status" value="2"/>
</dbReference>
<dbReference type="Gene3D" id="1.10.150.570">
    <property type="entry name" value="GidA associated domain, C-terminal subdomain"/>
    <property type="match status" value="1"/>
</dbReference>
<dbReference type="Gene3D" id="1.10.10.1800">
    <property type="entry name" value="tRNA uridine 5-carboxymethylaminomethyl modification enzyme MnmG/GidA"/>
    <property type="match status" value="1"/>
</dbReference>
<dbReference type="HAMAP" id="MF_00129">
    <property type="entry name" value="MnmG_GidA"/>
    <property type="match status" value="1"/>
</dbReference>
<dbReference type="InterPro" id="IPR036188">
    <property type="entry name" value="FAD/NAD-bd_sf"/>
</dbReference>
<dbReference type="InterPro" id="IPR049312">
    <property type="entry name" value="GIDA_C_N"/>
</dbReference>
<dbReference type="InterPro" id="IPR004416">
    <property type="entry name" value="MnmG"/>
</dbReference>
<dbReference type="InterPro" id="IPR002218">
    <property type="entry name" value="MnmG-rel"/>
</dbReference>
<dbReference type="InterPro" id="IPR020595">
    <property type="entry name" value="MnmG-rel_CS"/>
</dbReference>
<dbReference type="InterPro" id="IPR026904">
    <property type="entry name" value="MnmG_C"/>
</dbReference>
<dbReference type="InterPro" id="IPR047001">
    <property type="entry name" value="MnmG_C_subdom"/>
</dbReference>
<dbReference type="InterPro" id="IPR044920">
    <property type="entry name" value="MnmG_C_subdom_sf"/>
</dbReference>
<dbReference type="InterPro" id="IPR040131">
    <property type="entry name" value="MnmG_N"/>
</dbReference>
<dbReference type="NCBIfam" id="TIGR00136">
    <property type="entry name" value="mnmG_gidA"/>
    <property type="match status" value="1"/>
</dbReference>
<dbReference type="PANTHER" id="PTHR11806">
    <property type="entry name" value="GLUCOSE INHIBITED DIVISION PROTEIN A"/>
    <property type="match status" value="1"/>
</dbReference>
<dbReference type="PANTHER" id="PTHR11806:SF0">
    <property type="entry name" value="PROTEIN MTO1 HOMOLOG, MITOCHONDRIAL"/>
    <property type="match status" value="1"/>
</dbReference>
<dbReference type="Pfam" id="PF01134">
    <property type="entry name" value="GIDA"/>
    <property type="match status" value="1"/>
</dbReference>
<dbReference type="Pfam" id="PF21680">
    <property type="entry name" value="GIDA_C_1st"/>
    <property type="match status" value="1"/>
</dbReference>
<dbReference type="Pfam" id="PF13932">
    <property type="entry name" value="SAM_GIDA_C"/>
    <property type="match status" value="1"/>
</dbReference>
<dbReference type="PRINTS" id="PR00411">
    <property type="entry name" value="PNDRDTASEI"/>
</dbReference>
<dbReference type="SMART" id="SM01228">
    <property type="entry name" value="GIDA_assoc_3"/>
    <property type="match status" value="1"/>
</dbReference>
<dbReference type="SUPFAM" id="SSF51905">
    <property type="entry name" value="FAD/NAD(P)-binding domain"/>
    <property type="match status" value="1"/>
</dbReference>
<dbReference type="PROSITE" id="PS01280">
    <property type="entry name" value="GIDA_1"/>
    <property type="match status" value="1"/>
</dbReference>
<evidence type="ECO:0000255" key="1">
    <source>
        <dbReference type="HAMAP-Rule" id="MF_00129"/>
    </source>
</evidence>
<comment type="function">
    <text evidence="1">NAD-binding protein involved in the addition of a carboxymethylaminomethyl (cmnm) group at the wobble position (U34) of certain tRNAs, forming tRNA-cmnm(5)s(2)U34.</text>
</comment>
<comment type="cofactor">
    <cofactor evidence="1">
        <name>FAD</name>
        <dbReference type="ChEBI" id="CHEBI:57692"/>
    </cofactor>
</comment>
<comment type="subunit">
    <text evidence="1">Homodimer. Heterotetramer of two MnmE and two MnmG subunits.</text>
</comment>
<comment type="subcellular location">
    <subcellularLocation>
        <location evidence="1">Cytoplasm</location>
    </subcellularLocation>
</comment>
<comment type="similarity">
    <text evidence="1">Belongs to the MnmG family.</text>
</comment>
<name>MNMG_SOLUE</name>